<gene>
    <name evidence="1" type="primary">ureC</name>
    <name type="ordered locus">Vapar_4243</name>
</gene>
<dbReference type="EC" id="3.5.1.5" evidence="1"/>
<dbReference type="EMBL" id="CP001635">
    <property type="protein sequence ID" value="ACS20856.1"/>
    <property type="molecule type" value="Genomic_DNA"/>
</dbReference>
<dbReference type="SMR" id="C5CY00"/>
<dbReference type="STRING" id="543728.Vapar_4243"/>
<dbReference type="KEGG" id="vap:Vapar_4243"/>
<dbReference type="eggNOG" id="COG0804">
    <property type="taxonomic scope" value="Bacteria"/>
</dbReference>
<dbReference type="HOGENOM" id="CLU_000980_0_0_4"/>
<dbReference type="OrthoDB" id="9802793at2"/>
<dbReference type="UniPathway" id="UPA00258">
    <property type="reaction ID" value="UER00370"/>
</dbReference>
<dbReference type="GO" id="GO:0005737">
    <property type="term" value="C:cytoplasm"/>
    <property type="evidence" value="ECO:0007669"/>
    <property type="project" value="UniProtKB-SubCell"/>
</dbReference>
<dbReference type="GO" id="GO:0016151">
    <property type="term" value="F:nickel cation binding"/>
    <property type="evidence" value="ECO:0007669"/>
    <property type="project" value="UniProtKB-UniRule"/>
</dbReference>
<dbReference type="GO" id="GO:0009039">
    <property type="term" value="F:urease activity"/>
    <property type="evidence" value="ECO:0007669"/>
    <property type="project" value="UniProtKB-UniRule"/>
</dbReference>
<dbReference type="GO" id="GO:0043419">
    <property type="term" value="P:urea catabolic process"/>
    <property type="evidence" value="ECO:0007669"/>
    <property type="project" value="UniProtKB-UniRule"/>
</dbReference>
<dbReference type="CDD" id="cd00375">
    <property type="entry name" value="Urease_alpha"/>
    <property type="match status" value="1"/>
</dbReference>
<dbReference type="Gene3D" id="3.20.20.140">
    <property type="entry name" value="Metal-dependent hydrolases"/>
    <property type="match status" value="1"/>
</dbReference>
<dbReference type="Gene3D" id="2.30.40.10">
    <property type="entry name" value="Urease, subunit C, domain 1"/>
    <property type="match status" value="1"/>
</dbReference>
<dbReference type="HAMAP" id="MF_01953">
    <property type="entry name" value="Urease_alpha"/>
    <property type="match status" value="1"/>
</dbReference>
<dbReference type="InterPro" id="IPR006680">
    <property type="entry name" value="Amidohydro-rel"/>
</dbReference>
<dbReference type="InterPro" id="IPR011059">
    <property type="entry name" value="Metal-dep_hydrolase_composite"/>
</dbReference>
<dbReference type="InterPro" id="IPR032466">
    <property type="entry name" value="Metal_Hydrolase"/>
</dbReference>
<dbReference type="InterPro" id="IPR011612">
    <property type="entry name" value="Urease_alpha_N_dom"/>
</dbReference>
<dbReference type="InterPro" id="IPR050112">
    <property type="entry name" value="Urease_alpha_subunit"/>
</dbReference>
<dbReference type="InterPro" id="IPR017950">
    <property type="entry name" value="Urease_AS"/>
</dbReference>
<dbReference type="InterPro" id="IPR005848">
    <property type="entry name" value="Urease_asu"/>
</dbReference>
<dbReference type="InterPro" id="IPR017951">
    <property type="entry name" value="Urease_asu_c"/>
</dbReference>
<dbReference type="InterPro" id="IPR029754">
    <property type="entry name" value="Urease_Ni-bd"/>
</dbReference>
<dbReference type="NCBIfam" id="NF009685">
    <property type="entry name" value="PRK13206.1"/>
    <property type="match status" value="1"/>
</dbReference>
<dbReference type="NCBIfam" id="NF009686">
    <property type="entry name" value="PRK13207.1"/>
    <property type="match status" value="1"/>
</dbReference>
<dbReference type="NCBIfam" id="TIGR01792">
    <property type="entry name" value="urease_alph"/>
    <property type="match status" value="1"/>
</dbReference>
<dbReference type="PANTHER" id="PTHR43440">
    <property type="entry name" value="UREASE"/>
    <property type="match status" value="1"/>
</dbReference>
<dbReference type="PANTHER" id="PTHR43440:SF1">
    <property type="entry name" value="UREASE"/>
    <property type="match status" value="1"/>
</dbReference>
<dbReference type="Pfam" id="PF01979">
    <property type="entry name" value="Amidohydro_1"/>
    <property type="match status" value="1"/>
</dbReference>
<dbReference type="Pfam" id="PF00449">
    <property type="entry name" value="Urease_alpha"/>
    <property type="match status" value="1"/>
</dbReference>
<dbReference type="PRINTS" id="PR01752">
    <property type="entry name" value="UREASE"/>
</dbReference>
<dbReference type="SUPFAM" id="SSF51338">
    <property type="entry name" value="Composite domain of metallo-dependent hydrolases"/>
    <property type="match status" value="2"/>
</dbReference>
<dbReference type="SUPFAM" id="SSF51556">
    <property type="entry name" value="Metallo-dependent hydrolases"/>
    <property type="match status" value="1"/>
</dbReference>
<dbReference type="PROSITE" id="PS01120">
    <property type="entry name" value="UREASE_1"/>
    <property type="match status" value="1"/>
</dbReference>
<dbReference type="PROSITE" id="PS00145">
    <property type="entry name" value="UREASE_2"/>
    <property type="match status" value="1"/>
</dbReference>
<dbReference type="PROSITE" id="PS51368">
    <property type="entry name" value="UREASE_3"/>
    <property type="match status" value="1"/>
</dbReference>
<proteinExistence type="inferred from homology"/>
<evidence type="ECO:0000255" key="1">
    <source>
        <dbReference type="HAMAP-Rule" id="MF_01953"/>
    </source>
</evidence>
<protein>
    <recommendedName>
        <fullName evidence="1">Urease subunit alpha</fullName>
        <ecNumber evidence="1">3.5.1.5</ecNumber>
    </recommendedName>
    <alternativeName>
        <fullName evidence="1">Urea amidohydrolase subunit alpha</fullName>
    </alternativeName>
</protein>
<feature type="chain" id="PRO_1000216201" description="Urease subunit alpha">
    <location>
        <begin position="1"/>
        <end position="572"/>
    </location>
</feature>
<feature type="domain" description="Urease" evidence="1">
    <location>
        <begin position="134"/>
        <end position="572"/>
    </location>
</feature>
<feature type="active site" description="Proton donor" evidence="1">
    <location>
        <position position="325"/>
    </location>
</feature>
<feature type="binding site" evidence="1">
    <location>
        <position position="139"/>
    </location>
    <ligand>
        <name>Ni(2+)</name>
        <dbReference type="ChEBI" id="CHEBI:49786"/>
        <label>1</label>
    </ligand>
</feature>
<feature type="binding site" evidence="1">
    <location>
        <position position="141"/>
    </location>
    <ligand>
        <name>Ni(2+)</name>
        <dbReference type="ChEBI" id="CHEBI:49786"/>
        <label>1</label>
    </ligand>
</feature>
<feature type="binding site" description="via carbamate group" evidence="1">
    <location>
        <position position="222"/>
    </location>
    <ligand>
        <name>Ni(2+)</name>
        <dbReference type="ChEBI" id="CHEBI:49786"/>
        <label>1</label>
    </ligand>
</feature>
<feature type="binding site" description="via carbamate group" evidence="1">
    <location>
        <position position="222"/>
    </location>
    <ligand>
        <name>Ni(2+)</name>
        <dbReference type="ChEBI" id="CHEBI:49786"/>
        <label>2</label>
    </ligand>
</feature>
<feature type="binding site" evidence="1">
    <location>
        <position position="224"/>
    </location>
    <ligand>
        <name>substrate</name>
    </ligand>
</feature>
<feature type="binding site" evidence="1">
    <location>
        <position position="251"/>
    </location>
    <ligand>
        <name>Ni(2+)</name>
        <dbReference type="ChEBI" id="CHEBI:49786"/>
        <label>2</label>
    </ligand>
</feature>
<feature type="binding site" evidence="1">
    <location>
        <position position="277"/>
    </location>
    <ligand>
        <name>Ni(2+)</name>
        <dbReference type="ChEBI" id="CHEBI:49786"/>
        <label>2</label>
    </ligand>
</feature>
<feature type="binding site" evidence="1">
    <location>
        <position position="365"/>
    </location>
    <ligand>
        <name>Ni(2+)</name>
        <dbReference type="ChEBI" id="CHEBI:49786"/>
        <label>1</label>
    </ligand>
</feature>
<feature type="modified residue" description="N6-carboxylysine" evidence="1">
    <location>
        <position position="222"/>
    </location>
</feature>
<reference key="1">
    <citation type="journal article" date="2011" name="J. Bacteriol.">
        <title>Complete genome sequence of the metabolically versatile plant growth-promoting endophyte, Variovorax paradoxus S110.</title>
        <authorList>
            <person name="Han J.I."/>
            <person name="Choi H.K."/>
            <person name="Lee S.W."/>
            <person name="Orwin P.M."/>
            <person name="Kim J."/>
            <person name="Laroe S.L."/>
            <person name="Kim T.G."/>
            <person name="O'Neil J."/>
            <person name="Leadbetter J.R."/>
            <person name="Lee S.Y."/>
            <person name="Hur C.G."/>
            <person name="Spain J.C."/>
            <person name="Ovchinnikova G."/>
            <person name="Goodwin L."/>
            <person name="Han C."/>
        </authorList>
    </citation>
    <scope>NUCLEOTIDE SEQUENCE [LARGE SCALE GENOMIC DNA]</scope>
    <source>
        <strain>S110</strain>
    </source>
</reference>
<sequence>MATIGRRAYAEIFGPTVGDRVRLADTDLLIEVEADYTLRAGGYGEEVKFGGGKTIRDGMAQSQRTRAQGAVDTVLTNALILDHWGIVKADIGLKDGRIAAIGKAGNPDVQPGVDIVIGPGTEIISCEGNIVTAGGIDSHIHFICPQQIEEALASGITTMLGGGTGPATGTFATTATPGPWHIERMLQAADAFPMNLGFLGKGNASLPDALHEQIEAGVMGLKLHEDWGTTPSAISNCLDVADATDTQVAIHSDTLNESGFVENTIAAVGGRSICAFHTEGAGGGHAPDILRVVGEENFLPSSTNPTMPYTVNTLDEHVDMLMVCHHLDAGIAEDLAFAESRIRKETIAAEDVLHDLGAISMFSSDSQAMGRVGEVVLRCWQTAHKMKLQRGKLPEDSERNDNFRVKRYVAKYTINPAISHGIAHEVGSIEVGKWADLVIWKPAFFGVKPFTLIKGGTIAMAAMGDPNASIPTPQPVHYRPMFGSYGGSLARSSLTFVSQAGLAAGIKERYGLAKHLSAVKNIRNVRKKDLVHNGYTPKMEIDAQTYAVRADGHLLTCDPAVQLPLTQRYFLF</sequence>
<organism>
    <name type="scientific">Variovorax paradoxus (strain S110)</name>
    <dbReference type="NCBI Taxonomy" id="543728"/>
    <lineage>
        <taxon>Bacteria</taxon>
        <taxon>Pseudomonadati</taxon>
        <taxon>Pseudomonadota</taxon>
        <taxon>Betaproteobacteria</taxon>
        <taxon>Burkholderiales</taxon>
        <taxon>Comamonadaceae</taxon>
        <taxon>Variovorax</taxon>
    </lineage>
</organism>
<name>URE1_VARPS</name>
<accession>C5CY00</accession>
<keyword id="KW-0963">Cytoplasm</keyword>
<keyword id="KW-0378">Hydrolase</keyword>
<keyword id="KW-0479">Metal-binding</keyword>
<keyword id="KW-0533">Nickel</keyword>
<comment type="catalytic activity">
    <reaction evidence="1">
        <text>urea + 2 H2O + H(+) = hydrogencarbonate + 2 NH4(+)</text>
        <dbReference type="Rhea" id="RHEA:20557"/>
        <dbReference type="ChEBI" id="CHEBI:15377"/>
        <dbReference type="ChEBI" id="CHEBI:15378"/>
        <dbReference type="ChEBI" id="CHEBI:16199"/>
        <dbReference type="ChEBI" id="CHEBI:17544"/>
        <dbReference type="ChEBI" id="CHEBI:28938"/>
        <dbReference type="EC" id="3.5.1.5"/>
    </reaction>
</comment>
<comment type="cofactor">
    <cofactor evidence="1">
        <name>Ni cation</name>
        <dbReference type="ChEBI" id="CHEBI:25516"/>
    </cofactor>
    <text evidence="1">Binds 2 nickel ions per subunit.</text>
</comment>
<comment type="pathway">
    <text evidence="1">Nitrogen metabolism; urea degradation; CO(2) and NH(3) from urea (urease route): step 1/1.</text>
</comment>
<comment type="subunit">
    <text evidence="1">Heterotrimer of UreA (gamma), UreB (beta) and UreC (alpha) subunits. Three heterotrimers associate to form the active enzyme.</text>
</comment>
<comment type="subcellular location">
    <subcellularLocation>
        <location evidence="1">Cytoplasm</location>
    </subcellularLocation>
</comment>
<comment type="PTM">
    <text evidence="1">Carboxylation allows a single lysine to coordinate two nickel ions.</text>
</comment>
<comment type="similarity">
    <text evidence="1">Belongs to the metallo-dependent hydrolases superfamily. Urease alpha subunit family.</text>
</comment>